<dbReference type="STRING" id="13249.P85826"/>
<dbReference type="InParanoid" id="P85826"/>
<dbReference type="Proteomes" id="UP000015103">
    <property type="component" value="Unassembled WGS sequence"/>
</dbReference>
<dbReference type="GO" id="GO:0030424">
    <property type="term" value="C:axon"/>
    <property type="evidence" value="ECO:0000314"/>
    <property type="project" value="UniProtKB"/>
</dbReference>
<dbReference type="GO" id="GO:0030425">
    <property type="term" value="C:dendrite"/>
    <property type="evidence" value="ECO:0000314"/>
    <property type="project" value="UniProtKB"/>
</dbReference>
<dbReference type="GO" id="GO:0005576">
    <property type="term" value="C:extracellular region"/>
    <property type="evidence" value="ECO:0000314"/>
    <property type="project" value="UniProtKB"/>
</dbReference>
<dbReference type="GO" id="GO:0005615">
    <property type="term" value="C:extracellular space"/>
    <property type="evidence" value="ECO:0007669"/>
    <property type="project" value="TreeGrafter"/>
</dbReference>
<dbReference type="GO" id="GO:0043204">
    <property type="term" value="C:perikaryon"/>
    <property type="evidence" value="ECO:0000314"/>
    <property type="project" value="UniProtKB"/>
</dbReference>
<dbReference type="GO" id="GO:0008613">
    <property type="term" value="F:diuretic hormone activity"/>
    <property type="evidence" value="ECO:0007669"/>
    <property type="project" value="InterPro"/>
</dbReference>
<dbReference type="GO" id="GO:0001664">
    <property type="term" value="F:G protein-coupled receptor binding"/>
    <property type="evidence" value="ECO:0007669"/>
    <property type="project" value="TreeGrafter"/>
</dbReference>
<dbReference type="GO" id="GO:0007589">
    <property type="term" value="P:body fluid secretion"/>
    <property type="evidence" value="ECO:0000314"/>
    <property type="project" value="UniProtKB"/>
</dbReference>
<dbReference type="GO" id="GO:0035810">
    <property type="term" value="P:positive regulation of urine volume"/>
    <property type="evidence" value="ECO:0000314"/>
    <property type="project" value="UniProtKB"/>
</dbReference>
<dbReference type="GO" id="GO:0008016">
    <property type="term" value="P:regulation of heart contraction"/>
    <property type="evidence" value="ECO:0000314"/>
    <property type="project" value="UniProtKB"/>
</dbReference>
<dbReference type="GO" id="GO:0043134">
    <property type="term" value="P:regulation of hindgut contraction"/>
    <property type="evidence" value="ECO:0000314"/>
    <property type="project" value="UniProtKB"/>
</dbReference>
<dbReference type="InterPro" id="IPR034439">
    <property type="entry name" value="DH2-like"/>
</dbReference>
<dbReference type="PANTHER" id="PTHR41146">
    <property type="entry name" value="DIURETIC HORMONE CLASS 2"/>
    <property type="match status" value="1"/>
</dbReference>
<dbReference type="PANTHER" id="PTHR41146:SF1">
    <property type="entry name" value="DIURETIC HORMONE CLASS 2"/>
    <property type="match status" value="1"/>
</dbReference>
<comment type="function">
    <text evidence="3 4">Regulation of fluid secretion. Stimulates primary urine secretion by the Malpighian tubules. Increases the frequency of contraction in the heart and hindgut. Causes a dose-dependent stimulation of cAMP levels in the dorsal vessel and hindgut, but not in Malpighian tubules. Has synergistic effects on urine secretion by Malpighian tubules with serotonin.</text>
</comment>
<comment type="subcellular location">
    <subcellularLocation>
        <location evidence="3">Perikaryon</location>
    </subcellularLocation>
    <subcellularLocation>
        <location evidence="3">Cell projection</location>
        <location evidence="3">Dendrite</location>
    </subcellularLocation>
    <subcellularLocation>
        <location evidence="3">Cell projection</location>
        <location evidence="3">Axon</location>
    </subcellularLocation>
    <subcellularLocation>
        <location evidence="3">Secreted</location>
    </subcellularLocation>
</comment>
<comment type="tissue specificity">
    <text evidence="3 4">Detected throughout the central nervous system in fifth instar larvae, particularly in the medial and lateral neurosecretory cells and the dorsal unpaired median neurons of the mesothoracic ganglionic mass. Also detected in nerve processes over the salivary glands, dorsal hindgut, anterior dorsal vessel and dorsal diaphragm, and at the neurohemal sites of the abdominal nerves. Not detected in the nerves directly innervating the heart, alary muscles or posterior dorsal vessel. One hour after feeding levels on the dorsal surface of the mesothoracic ganglionic mass, the neurohemal sites and the processes above the dorsal hindgut are much reduced while background levels are increased (at protein level).</text>
</comment>
<comment type="mass spectrometry" mass="2986.61" method="MALDI" evidence="4 5">
    <molecule>Diuretic hormone class 2</molecule>
</comment>
<comment type="mass spectrometry" mass="2986.5" method="MALDI" evidence="5">
    <molecule>Diuretic hormone class 2</molecule>
</comment>
<comment type="mass spectrometry" mass="1535.79" method="MALDI" evidence="5">
    <molecule>Diuretic hormone class 2(1-16)</molecule>
</comment>
<comment type="similarity">
    <text evidence="2">Belongs to the diuretic hormone class 2 family.</text>
</comment>
<proteinExistence type="evidence at protein level"/>
<organism>
    <name type="scientific">Rhodnius prolixus</name>
    <name type="common">Triatomid bug</name>
    <dbReference type="NCBI Taxonomy" id="13249"/>
    <lineage>
        <taxon>Eukaryota</taxon>
        <taxon>Metazoa</taxon>
        <taxon>Ecdysozoa</taxon>
        <taxon>Arthropoda</taxon>
        <taxon>Hexapoda</taxon>
        <taxon>Insecta</taxon>
        <taxon>Pterygota</taxon>
        <taxon>Neoptera</taxon>
        <taxon>Paraneoptera</taxon>
        <taxon>Hemiptera</taxon>
        <taxon>Heteroptera</taxon>
        <taxon>Panheteroptera</taxon>
        <taxon>Cimicomorpha</taxon>
        <taxon>Reduviidae</taxon>
        <taxon>Triatominae</taxon>
        <taxon>Rhodnius</taxon>
    </lineage>
</organism>
<reference key="1">
    <citation type="journal article" date="2008" name="J. Exp. Biol.">
        <title>Amino acid sequence and biological activity of a calcitonin-like diuretic hormone (DH31) from Rhodnius prolixus.</title>
        <authorList>
            <person name="Te Brugge V.A."/>
            <person name="Schooley D.A."/>
            <person name="Orchard I."/>
        </authorList>
    </citation>
    <scope>PROTEIN SEQUENCE</scope>
    <scope>FUNCTION</scope>
    <scope>TISSUE SPECIFICITY</scope>
    <scope>MASS SPECTROMETRY</scope>
    <scope>AMIDATION AT PRO-31</scope>
    <source>
        <tissue>CNS</tissue>
    </source>
</reference>
<reference evidence="7" key="2">
    <citation type="journal article" date="2009" name="Proteomics">
        <title>The neuropeptidome of Rhodnius prolixus brain.</title>
        <authorList>
            <person name="Ons S."/>
            <person name="Richter F."/>
            <person name="Urlaub H."/>
            <person name="Pomar R.R."/>
        </authorList>
    </citation>
    <scope>PROTEIN SEQUENCE</scope>
    <scope>MASS SPECTROMETRY</scope>
    <scope>AMIDATION AT PRO-31</scope>
    <source>
        <tissue evidence="5">Brain</tissue>
    </source>
</reference>
<reference key="3">
    <citation type="journal article" date="2005" name="Peptides">
        <title>Presence and activity of a Dippu-DH31-like peptide in the blood-feeding bug, Rhodnius prolixus.</title>
        <authorList>
            <person name="Te Brugge V.A."/>
            <person name="Lombardi V.C."/>
            <person name="Schooley D.A."/>
            <person name="Orchard I."/>
        </authorList>
    </citation>
    <scope>FUNCTION</scope>
    <scope>SUBCELLULAR LOCATION</scope>
    <scope>TISSUE SPECIFICITY</scope>
</reference>
<evidence type="ECO:0000250" key="1">
    <source>
        <dbReference type="UniProtKB" id="P82372"/>
    </source>
</evidence>
<evidence type="ECO:0000255" key="2"/>
<evidence type="ECO:0000269" key="3">
    <source>
    </source>
</evidence>
<evidence type="ECO:0000269" key="4">
    <source>
    </source>
</evidence>
<evidence type="ECO:0000269" key="5">
    <source>
    </source>
</evidence>
<evidence type="ECO:0000303" key="6">
    <source>
    </source>
</evidence>
<evidence type="ECO:0000305" key="7"/>
<feature type="peptide" id="PRO_0000364023" description="Diuretic hormone class 2" evidence="5">
    <location>
        <begin position="1"/>
        <end position="31"/>
    </location>
</feature>
<feature type="peptide" id="PRO_0000365761" description="Diuretic hormone class 2(1-16)" evidence="5">
    <location>
        <begin position="1"/>
        <end position="16"/>
    </location>
</feature>
<feature type="modified residue" description="Proline amide" evidence="4 5">
    <location>
        <position position="31"/>
    </location>
</feature>
<sequence length="31" mass="2988">GLDLGLSRGFSGSQAAKHLMGLAAANYAGGP</sequence>
<accession>P85826</accession>
<accession>P86167</accession>
<protein>
    <recommendedName>
        <fullName evidence="6">Diuretic hormone class 2</fullName>
    </recommendedName>
    <alternativeName>
        <fullName evidence="6">DH(31)</fullName>
    </alternativeName>
    <alternativeName>
        <fullName evidence="1">Diuretic peptide</fullName>
        <shortName evidence="1">DP</shortName>
    </alternativeName>
    <alternativeName>
        <fullName evidence="6">Rhopr-DH31</fullName>
    </alternativeName>
    <component>
        <recommendedName>
            <fullName evidence="1">Diuretic hormone class 2(1-16)</fullName>
        </recommendedName>
        <alternativeName>
            <fullName evidence="6">Rhopr-DH31(1-16)</fullName>
        </alternativeName>
    </component>
</protein>
<name>DIUX_RHOPR</name>
<keyword id="KW-0027">Amidation</keyword>
<keyword id="KW-0966">Cell projection</keyword>
<keyword id="KW-0903">Direct protein sequencing</keyword>
<keyword id="KW-0372">Hormone</keyword>
<keyword id="KW-1185">Reference proteome</keyword>
<keyword id="KW-0964">Secreted</keyword>